<keyword id="KW-0028">Amino-acid biosynthesis</keyword>
<keyword id="KW-0100">Branched-chain amino acid biosynthesis</keyword>
<keyword id="KW-0432">Leucine biosynthesis</keyword>
<keyword id="KW-0456">Lyase</keyword>
<keyword id="KW-1185">Reference proteome</keyword>
<proteinExistence type="inferred from homology"/>
<evidence type="ECO:0000255" key="1">
    <source>
        <dbReference type="HAMAP-Rule" id="MF_01031"/>
    </source>
</evidence>
<dbReference type="EC" id="4.2.1.33" evidence="1"/>
<dbReference type="EMBL" id="AL591981">
    <property type="protein sequence ID" value="CAD00068.1"/>
    <property type="molecule type" value="Genomic_DNA"/>
</dbReference>
<dbReference type="PIR" id="AF1323">
    <property type="entry name" value="AF1323"/>
</dbReference>
<dbReference type="RefSeq" id="NP_465514.1">
    <property type="nucleotide sequence ID" value="NC_003210.1"/>
</dbReference>
<dbReference type="RefSeq" id="WP_003723155.1">
    <property type="nucleotide sequence ID" value="NZ_CP149495.1"/>
</dbReference>
<dbReference type="SMR" id="Q8Y5R6"/>
<dbReference type="STRING" id="169963.gene:17594675"/>
<dbReference type="PaxDb" id="169963-lmo1990"/>
<dbReference type="EnsemblBacteria" id="CAD00068">
    <property type="protein sequence ID" value="CAD00068"/>
    <property type="gene ID" value="CAD00068"/>
</dbReference>
<dbReference type="GeneID" id="984859"/>
<dbReference type="KEGG" id="lmo:lmo1990"/>
<dbReference type="PATRIC" id="fig|169963.11.peg.2037"/>
<dbReference type="eggNOG" id="COG0066">
    <property type="taxonomic scope" value="Bacteria"/>
</dbReference>
<dbReference type="HOGENOM" id="CLU_081378_0_3_9"/>
<dbReference type="OrthoDB" id="9777465at2"/>
<dbReference type="PhylomeDB" id="Q8Y5R6"/>
<dbReference type="BioCyc" id="LMON169963:LMO1990-MONOMER"/>
<dbReference type="UniPathway" id="UPA00048">
    <property type="reaction ID" value="UER00071"/>
</dbReference>
<dbReference type="Proteomes" id="UP000000817">
    <property type="component" value="Chromosome"/>
</dbReference>
<dbReference type="GO" id="GO:0009316">
    <property type="term" value="C:3-isopropylmalate dehydratase complex"/>
    <property type="evidence" value="ECO:0007669"/>
    <property type="project" value="InterPro"/>
</dbReference>
<dbReference type="GO" id="GO:0003861">
    <property type="term" value="F:3-isopropylmalate dehydratase activity"/>
    <property type="evidence" value="ECO:0007669"/>
    <property type="project" value="UniProtKB-UniRule"/>
</dbReference>
<dbReference type="GO" id="GO:0009098">
    <property type="term" value="P:L-leucine biosynthetic process"/>
    <property type="evidence" value="ECO:0007669"/>
    <property type="project" value="UniProtKB-UniRule"/>
</dbReference>
<dbReference type="CDD" id="cd01577">
    <property type="entry name" value="IPMI_Swivel"/>
    <property type="match status" value="1"/>
</dbReference>
<dbReference type="FunFam" id="3.20.19.10:FF:000003">
    <property type="entry name" value="3-isopropylmalate dehydratase small subunit"/>
    <property type="match status" value="1"/>
</dbReference>
<dbReference type="Gene3D" id="3.20.19.10">
    <property type="entry name" value="Aconitase, domain 4"/>
    <property type="match status" value="1"/>
</dbReference>
<dbReference type="HAMAP" id="MF_01031">
    <property type="entry name" value="LeuD_type1"/>
    <property type="match status" value="1"/>
</dbReference>
<dbReference type="InterPro" id="IPR004431">
    <property type="entry name" value="3-IsopropMal_deHydase_ssu"/>
</dbReference>
<dbReference type="InterPro" id="IPR015928">
    <property type="entry name" value="Aconitase/3IPM_dehydase_swvl"/>
</dbReference>
<dbReference type="InterPro" id="IPR000573">
    <property type="entry name" value="AconitaseA/IPMdHydase_ssu_swvl"/>
</dbReference>
<dbReference type="InterPro" id="IPR033940">
    <property type="entry name" value="IPMI_Swivel"/>
</dbReference>
<dbReference type="InterPro" id="IPR050075">
    <property type="entry name" value="LeuD"/>
</dbReference>
<dbReference type="NCBIfam" id="TIGR00171">
    <property type="entry name" value="leuD"/>
    <property type="match status" value="1"/>
</dbReference>
<dbReference type="NCBIfam" id="NF002458">
    <property type="entry name" value="PRK01641.1"/>
    <property type="match status" value="1"/>
</dbReference>
<dbReference type="PANTHER" id="PTHR43345:SF5">
    <property type="entry name" value="3-ISOPROPYLMALATE DEHYDRATASE SMALL SUBUNIT"/>
    <property type="match status" value="1"/>
</dbReference>
<dbReference type="PANTHER" id="PTHR43345">
    <property type="entry name" value="3-ISOPROPYLMALATE DEHYDRATASE SMALL SUBUNIT 2-RELATED-RELATED"/>
    <property type="match status" value="1"/>
</dbReference>
<dbReference type="Pfam" id="PF00694">
    <property type="entry name" value="Aconitase_C"/>
    <property type="match status" value="1"/>
</dbReference>
<dbReference type="SUPFAM" id="SSF52016">
    <property type="entry name" value="LeuD/IlvD-like"/>
    <property type="match status" value="1"/>
</dbReference>
<reference key="1">
    <citation type="journal article" date="2001" name="Science">
        <title>Comparative genomics of Listeria species.</title>
        <authorList>
            <person name="Glaser P."/>
            <person name="Frangeul L."/>
            <person name="Buchrieser C."/>
            <person name="Rusniok C."/>
            <person name="Amend A."/>
            <person name="Baquero F."/>
            <person name="Berche P."/>
            <person name="Bloecker H."/>
            <person name="Brandt P."/>
            <person name="Chakraborty T."/>
            <person name="Charbit A."/>
            <person name="Chetouani F."/>
            <person name="Couve E."/>
            <person name="de Daruvar A."/>
            <person name="Dehoux P."/>
            <person name="Domann E."/>
            <person name="Dominguez-Bernal G."/>
            <person name="Duchaud E."/>
            <person name="Durant L."/>
            <person name="Dussurget O."/>
            <person name="Entian K.-D."/>
            <person name="Fsihi H."/>
            <person name="Garcia-del Portillo F."/>
            <person name="Garrido P."/>
            <person name="Gautier L."/>
            <person name="Goebel W."/>
            <person name="Gomez-Lopez N."/>
            <person name="Hain T."/>
            <person name="Hauf J."/>
            <person name="Jackson D."/>
            <person name="Jones L.-M."/>
            <person name="Kaerst U."/>
            <person name="Kreft J."/>
            <person name="Kuhn M."/>
            <person name="Kunst F."/>
            <person name="Kurapkat G."/>
            <person name="Madueno E."/>
            <person name="Maitournam A."/>
            <person name="Mata Vicente J."/>
            <person name="Ng E."/>
            <person name="Nedjari H."/>
            <person name="Nordsiek G."/>
            <person name="Novella S."/>
            <person name="de Pablos B."/>
            <person name="Perez-Diaz J.-C."/>
            <person name="Purcell R."/>
            <person name="Remmel B."/>
            <person name="Rose M."/>
            <person name="Schlueter T."/>
            <person name="Simoes N."/>
            <person name="Tierrez A."/>
            <person name="Vazquez-Boland J.-A."/>
            <person name="Voss H."/>
            <person name="Wehland J."/>
            <person name="Cossart P."/>
        </authorList>
    </citation>
    <scope>NUCLEOTIDE SEQUENCE [LARGE SCALE GENOMIC DNA]</scope>
    <source>
        <strain>ATCC BAA-679 / EGD-e</strain>
    </source>
</reference>
<comment type="function">
    <text evidence="1">Catalyzes the isomerization between 2-isopropylmalate and 3-isopropylmalate, via the formation of 2-isopropylmaleate.</text>
</comment>
<comment type="catalytic activity">
    <reaction evidence="1">
        <text>(2R,3S)-3-isopropylmalate = (2S)-2-isopropylmalate</text>
        <dbReference type="Rhea" id="RHEA:32287"/>
        <dbReference type="ChEBI" id="CHEBI:1178"/>
        <dbReference type="ChEBI" id="CHEBI:35121"/>
        <dbReference type="EC" id="4.2.1.33"/>
    </reaction>
</comment>
<comment type="pathway">
    <text evidence="1">Amino-acid biosynthesis; L-leucine biosynthesis; L-leucine from 3-methyl-2-oxobutanoate: step 2/4.</text>
</comment>
<comment type="subunit">
    <text evidence="1">Heterodimer of LeuC and LeuD.</text>
</comment>
<comment type="similarity">
    <text evidence="1">Belongs to the LeuD family. LeuD type 1 subfamily.</text>
</comment>
<feature type="chain" id="PRO_0000141831" description="3-isopropylmalate dehydratase small subunit">
    <location>
        <begin position="1"/>
        <end position="193"/>
    </location>
</feature>
<protein>
    <recommendedName>
        <fullName evidence="1">3-isopropylmalate dehydratase small subunit</fullName>
        <ecNumber evidence="1">4.2.1.33</ecNumber>
    </recommendedName>
    <alternativeName>
        <fullName evidence="1">Alpha-IPM isomerase</fullName>
        <shortName evidence="1">IPMI</shortName>
    </alternativeName>
    <alternativeName>
        <fullName evidence="1">Isopropylmalate isomerase</fullName>
    </alternativeName>
</protein>
<accession>Q8Y5R6</accession>
<sequence length="193" mass="21986">MEEIKVHIGKTVALMNDNIDTDQIIPKSFLKRIERTGFGEFLFDSWRYLPNRKPNPDFPLNALDRQEATILITGENFGCGSSREHAAWALLDYRFRVIIAGSYSDIFYMNCTKNGVLPIVLPREAREKLAKIAAEENVTIDLPNQQVISSVGTYPFEIDATWKNKFINGLDDIAITFEHIDAIKAYEQKVDSI</sequence>
<gene>
    <name evidence="1" type="primary">leuD</name>
    <name type="ordered locus">lmo1990</name>
</gene>
<name>LEUD_LISMO</name>
<organism>
    <name type="scientific">Listeria monocytogenes serovar 1/2a (strain ATCC BAA-679 / EGD-e)</name>
    <dbReference type="NCBI Taxonomy" id="169963"/>
    <lineage>
        <taxon>Bacteria</taxon>
        <taxon>Bacillati</taxon>
        <taxon>Bacillota</taxon>
        <taxon>Bacilli</taxon>
        <taxon>Bacillales</taxon>
        <taxon>Listeriaceae</taxon>
        <taxon>Listeria</taxon>
    </lineage>
</organism>